<protein>
    <recommendedName>
        <fullName evidence="7">Arabinosyltransferase RRA2</fullName>
        <ecNumber evidence="7">2.4.2.-</ecNumber>
    </recommendedName>
    <alternativeName>
        <fullName evidence="6">Protein REDUCED RESIDUAL ARABINOSE 1</fullName>
    </alternativeName>
</protein>
<name>RRA2_ARATH</name>
<gene>
    <name evidence="6" type="primary">RRA2</name>
    <name evidence="9" type="ordered locus">At1g75110</name>
    <name evidence="10" type="ORF">F9E10.4</name>
</gene>
<accession>Q9C9Q5</accession>
<accession>Q8LCK7</accession>
<dbReference type="EC" id="2.4.2.-" evidence="7"/>
<dbReference type="EMBL" id="KJ138932">
    <property type="protein sequence ID" value="AHL38872.1"/>
    <property type="molecule type" value="mRNA"/>
</dbReference>
<dbReference type="EMBL" id="AC013258">
    <property type="protein sequence ID" value="AAG51917.1"/>
    <property type="molecule type" value="Genomic_DNA"/>
</dbReference>
<dbReference type="EMBL" id="CP002684">
    <property type="protein sequence ID" value="AEE35673.1"/>
    <property type="molecule type" value="Genomic_DNA"/>
</dbReference>
<dbReference type="EMBL" id="AY039531">
    <property type="protein sequence ID" value="AAK62587.1"/>
    <property type="molecule type" value="mRNA"/>
</dbReference>
<dbReference type="EMBL" id="AY102148">
    <property type="protein sequence ID" value="AAM26715.1"/>
    <property type="molecule type" value="mRNA"/>
</dbReference>
<dbReference type="EMBL" id="AY086542">
    <property type="protein sequence ID" value="AAM63606.1"/>
    <property type="molecule type" value="mRNA"/>
</dbReference>
<dbReference type="PIR" id="B96781">
    <property type="entry name" value="B96781"/>
</dbReference>
<dbReference type="RefSeq" id="NP_565102.1">
    <property type="nucleotide sequence ID" value="NM_106167.3"/>
</dbReference>
<dbReference type="FunCoup" id="Q9C9Q5">
    <property type="interactions" value="20"/>
</dbReference>
<dbReference type="IntAct" id="Q9C9Q5">
    <property type="interactions" value="1"/>
</dbReference>
<dbReference type="STRING" id="3702.Q9C9Q5"/>
<dbReference type="CAZy" id="GT77">
    <property type="family name" value="Glycosyltransferase Family 77"/>
</dbReference>
<dbReference type="GlyCosmos" id="Q9C9Q5">
    <property type="glycosylation" value="1 site, No reported glycans"/>
</dbReference>
<dbReference type="GlyGen" id="Q9C9Q5">
    <property type="glycosylation" value="1 site"/>
</dbReference>
<dbReference type="PaxDb" id="3702-AT1G75110.1"/>
<dbReference type="ProteomicsDB" id="228210"/>
<dbReference type="EnsemblPlants" id="AT1G75110.1">
    <property type="protein sequence ID" value="AT1G75110.1"/>
    <property type="gene ID" value="AT1G75110"/>
</dbReference>
<dbReference type="GeneID" id="843848"/>
<dbReference type="Gramene" id="AT1G75110.1">
    <property type="protein sequence ID" value="AT1G75110.1"/>
    <property type="gene ID" value="AT1G75110"/>
</dbReference>
<dbReference type="KEGG" id="ath:AT1G75110"/>
<dbReference type="Araport" id="AT1G75110"/>
<dbReference type="TAIR" id="AT1G75110">
    <property type="gene designation" value="RRA2"/>
</dbReference>
<dbReference type="eggNOG" id="ENOG502QRD4">
    <property type="taxonomic scope" value="Eukaryota"/>
</dbReference>
<dbReference type="HOGENOM" id="CLU_037805_0_0_1"/>
<dbReference type="InParanoid" id="Q9C9Q5"/>
<dbReference type="OMA" id="KSEAWDQ"/>
<dbReference type="PhylomeDB" id="Q9C9Q5"/>
<dbReference type="PRO" id="PR:Q9C9Q5"/>
<dbReference type="Proteomes" id="UP000006548">
    <property type="component" value="Chromosome 1"/>
</dbReference>
<dbReference type="ExpressionAtlas" id="Q9C9Q5">
    <property type="expression patterns" value="baseline and differential"/>
</dbReference>
<dbReference type="GO" id="GO:0000139">
    <property type="term" value="C:Golgi membrane"/>
    <property type="evidence" value="ECO:0007669"/>
    <property type="project" value="UniProtKB-SubCell"/>
</dbReference>
<dbReference type="GO" id="GO:0016757">
    <property type="term" value="F:glycosyltransferase activity"/>
    <property type="evidence" value="ECO:0007669"/>
    <property type="project" value="UniProtKB-KW"/>
</dbReference>
<dbReference type="GO" id="GO:0071555">
    <property type="term" value="P:cell wall organization"/>
    <property type="evidence" value="ECO:0007669"/>
    <property type="project" value="UniProtKB-KW"/>
</dbReference>
<dbReference type="GO" id="GO:0080147">
    <property type="term" value="P:root hair cell development"/>
    <property type="evidence" value="ECO:0000315"/>
    <property type="project" value="TAIR"/>
</dbReference>
<dbReference type="InterPro" id="IPR005069">
    <property type="entry name" value="Nucl-diP-sugar_transferase"/>
</dbReference>
<dbReference type="InterPro" id="IPR029044">
    <property type="entry name" value="Nucleotide-diphossugar_trans"/>
</dbReference>
<dbReference type="InterPro" id="IPR044290">
    <property type="entry name" value="RRA1/2/3"/>
</dbReference>
<dbReference type="PANTHER" id="PTHR46581:SF9">
    <property type="entry name" value="ARABINOSYLTRANSFERASE RRA1-RELATED"/>
    <property type="match status" value="1"/>
</dbReference>
<dbReference type="PANTHER" id="PTHR46581">
    <property type="entry name" value="ARABINOSYLTRANSFERASE RRA3"/>
    <property type="match status" value="1"/>
</dbReference>
<dbReference type="Pfam" id="PF03407">
    <property type="entry name" value="Nucleotid_trans"/>
    <property type="match status" value="1"/>
</dbReference>
<dbReference type="SUPFAM" id="SSF53448">
    <property type="entry name" value="Nucleotide-diphospho-sugar transferases"/>
    <property type="match status" value="1"/>
</dbReference>
<feature type="chain" id="PRO_0000434538" description="Arabinosyltransferase RRA2">
    <location>
        <begin position="1"/>
        <end position="428"/>
    </location>
</feature>
<feature type="topological domain" description="Cytoplasmic" evidence="7">
    <location>
        <begin position="1"/>
        <end position="15"/>
    </location>
</feature>
<feature type="transmembrane region" description="Helical; Signal-anchor for type II membrane protein" evidence="2">
    <location>
        <begin position="16"/>
        <end position="36"/>
    </location>
</feature>
<feature type="topological domain" description="Lumenal" evidence="7">
    <location>
        <begin position="37"/>
        <end position="428"/>
    </location>
</feature>
<feature type="short sequence motif" description="DXD motif" evidence="7">
    <location>
        <begin position="250"/>
        <end position="252"/>
    </location>
</feature>
<feature type="glycosylation site" description="N-linked (GlcNAc...) asparagine" evidence="3">
    <location>
        <position position="278"/>
    </location>
</feature>
<feature type="sequence conflict" description="In Ref. 5; AAM63606." evidence="7" ref="5">
    <original>A</original>
    <variation>S</variation>
    <location>
        <position position="2"/>
    </location>
</feature>
<feature type="sequence conflict" description="In Ref. 5; AAM63606." evidence="7" ref="5">
    <original>F</original>
    <variation>L</variation>
    <location>
        <position position="207"/>
    </location>
</feature>
<feature type="sequence conflict" description="In Ref. 5; AAM63606." evidence="7" ref="5">
    <original>I</original>
    <variation>L</variation>
    <location>
        <position position="318"/>
    </location>
</feature>
<evidence type="ECO:0000250" key="1">
    <source>
        <dbReference type="UniProtKB" id="Q9JI93"/>
    </source>
</evidence>
<evidence type="ECO:0000255" key="2"/>
<evidence type="ECO:0000255" key="3">
    <source>
        <dbReference type="PROSITE-ProRule" id="PRU00498"/>
    </source>
</evidence>
<evidence type="ECO:0000269" key="4">
    <source>
    </source>
</evidence>
<evidence type="ECO:0000269" key="5">
    <source>
    </source>
</evidence>
<evidence type="ECO:0000303" key="6">
    <source>
    </source>
</evidence>
<evidence type="ECO:0000305" key="7"/>
<evidence type="ECO:0000305" key="8">
    <source>
    </source>
</evidence>
<evidence type="ECO:0000312" key="9">
    <source>
        <dbReference type="Araport" id="AT1G75110"/>
    </source>
</evidence>
<evidence type="ECO:0000312" key="10">
    <source>
        <dbReference type="EMBL" id="AAG51917.1"/>
    </source>
</evidence>
<sequence>MAGRRDRIQQLRGSRIAIAIFVGILIGCVCSVLFPNGFFNSGSSLIANEERISKSTSTDGLASCESSERVKMLKSDFSIISVKNAELRKQVRELTEKVRLAEQETENARKQVLVLGSEIKAGPFGTVKSLRTNPTVVPDESVNPRLAKLLEKVAVNKEIIVVLANSNVKPMLELQIASVKRVGIQNYLIVALDDSMESFCESKEVVFYKRDPDKAVDMVGKSGGNHAVSGLKFRVLREFLQLGYSVLLSDVDIVFLQNPFSHLHRDSDVESMSDGHDNNTAYGFNDVFDEPSMGWARYAHTMRIWVFNSGFFYLRPTIPSIDLLDRVADTLSKSEAWDQAVFNEQLFYPSHPGYTGLHASKRVMDMYEFMNSKVLFKTVRKNQELKKLKPVIVHLNYHPDKLERMHAVVEFYVNGKQDALDSFPDGSD</sequence>
<reference key="1">
    <citation type="journal article" date="2014" name="Plant J.">
        <title>The plant glycosyltransferase clone collection for functional genomics.</title>
        <authorList>
            <person name="Lao J."/>
            <person name="Oikawa A."/>
            <person name="Bromley J.R."/>
            <person name="McInerney P."/>
            <person name="Suttangkakul A."/>
            <person name="Smith-Moritz A.M."/>
            <person name="Plahar H."/>
            <person name="Chiu T.-Y."/>
            <person name="Gonzalez Fernandez-Nino S.M.G."/>
            <person name="Ebert B."/>
            <person name="Yang F."/>
            <person name="Christiansen K.M."/>
            <person name="Hansen S.F."/>
            <person name="Stonebloom S."/>
            <person name="Adams P.D."/>
            <person name="Ronald P.C."/>
            <person name="Hillson N.J."/>
            <person name="Hadi M.Z."/>
            <person name="Vega-Sanchez M.E."/>
            <person name="Loque D."/>
            <person name="Scheller H.V."/>
            <person name="Heazlewood J.L."/>
        </authorList>
    </citation>
    <scope>NUCLEOTIDE SEQUENCE [MRNA]</scope>
    <source>
        <strain>cv. Columbia</strain>
    </source>
</reference>
<reference key="2">
    <citation type="journal article" date="2000" name="Nature">
        <title>Sequence and analysis of chromosome 1 of the plant Arabidopsis thaliana.</title>
        <authorList>
            <person name="Theologis A."/>
            <person name="Ecker J.R."/>
            <person name="Palm C.J."/>
            <person name="Federspiel N.A."/>
            <person name="Kaul S."/>
            <person name="White O."/>
            <person name="Alonso J."/>
            <person name="Altafi H."/>
            <person name="Araujo R."/>
            <person name="Bowman C.L."/>
            <person name="Brooks S.Y."/>
            <person name="Buehler E."/>
            <person name="Chan A."/>
            <person name="Chao Q."/>
            <person name="Chen H."/>
            <person name="Cheuk R.F."/>
            <person name="Chin C.W."/>
            <person name="Chung M.K."/>
            <person name="Conn L."/>
            <person name="Conway A.B."/>
            <person name="Conway A.R."/>
            <person name="Creasy T.H."/>
            <person name="Dewar K."/>
            <person name="Dunn P."/>
            <person name="Etgu P."/>
            <person name="Feldblyum T.V."/>
            <person name="Feng J.-D."/>
            <person name="Fong B."/>
            <person name="Fujii C.Y."/>
            <person name="Gill J.E."/>
            <person name="Goldsmith A.D."/>
            <person name="Haas B."/>
            <person name="Hansen N.F."/>
            <person name="Hughes B."/>
            <person name="Huizar L."/>
            <person name="Hunter J.L."/>
            <person name="Jenkins J."/>
            <person name="Johnson-Hopson C."/>
            <person name="Khan S."/>
            <person name="Khaykin E."/>
            <person name="Kim C.J."/>
            <person name="Koo H.L."/>
            <person name="Kremenetskaia I."/>
            <person name="Kurtz D.B."/>
            <person name="Kwan A."/>
            <person name="Lam B."/>
            <person name="Langin-Hooper S."/>
            <person name="Lee A."/>
            <person name="Lee J.M."/>
            <person name="Lenz C.A."/>
            <person name="Li J.H."/>
            <person name="Li Y.-P."/>
            <person name="Lin X."/>
            <person name="Liu S.X."/>
            <person name="Liu Z.A."/>
            <person name="Luros J.S."/>
            <person name="Maiti R."/>
            <person name="Marziali A."/>
            <person name="Militscher J."/>
            <person name="Miranda M."/>
            <person name="Nguyen M."/>
            <person name="Nierman W.C."/>
            <person name="Osborne B.I."/>
            <person name="Pai G."/>
            <person name="Peterson J."/>
            <person name="Pham P.K."/>
            <person name="Rizzo M."/>
            <person name="Rooney T."/>
            <person name="Rowley D."/>
            <person name="Sakano H."/>
            <person name="Salzberg S.L."/>
            <person name="Schwartz J.R."/>
            <person name="Shinn P."/>
            <person name="Southwick A.M."/>
            <person name="Sun H."/>
            <person name="Tallon L.J."/>
            <person name="Tambunga G."/>
            <person name="Toriumi M.J."/>
            <person name="Town C.D."/>
            <person name="Utterback T."/>
            <person name="Van Aken S."/>
            <person name="Vaysberg M."/>
            <person name="Vysotskaia V.S."/>
            <person name="Walker M."/>
            <person name="Wu D."/>
            <person name="Yu G."/>
            <person name="Fraser C.M."/>
            <person name="Venter J.C."/>
            <person name="Davis R.W."/>
        </authorList>
    </citation>
    <scope>NUCLEOTIDE SEQUENCE [LARGE SCALE GENOMIC DNA]</scope>
    <source>
        <strain>cv. Columbia</strain>
    </source>
</reference>
<reference key="3">
    <citation type="journal article" date="2017" name="Plant J.">
        <title>Araport11: a complete reannotation of the Arabidopsis thaliana reference genome.</title>
        <authorList>
            <person name="Cheng C.Y."/>
            <person name="Krishnakumar V."/>
            <person name="Chan A.P."/>
            <person name="Thibaud-Nissen F."/>
            <person name="Schobel S."/>
            <person name="Town C.D."/>
        </authorList>
    </citation>
    <scope>GENOME REANNOTATION</scope>
    <source>
        <strain>cv. Columbia</strain>
    </source>
</reference>
<reference key="4">
    <citation type="journal article" date="2003" name="Science">
        <title>Empirical analysis of transcriptional activity in the Arabidopsis genome.</title>
        <authorList>
            <person name="Yamada K."/>
            <person name="Lim J."/>
            <person name="Dale J.M."/>
            <person name="Chen H."/>
            <person name="Shinn P."/>
            <person name="Palm C.J."/>
            <person name="Southwick A.M."/>
            <person name="Wu H.C."/>
            <person name="Kim C.J."/>
            <person name="Nguyen M."/>
            <person name="Pham P.K."/>
            <person name="Cheuk R.F."/>
            <person name="Karlin-Newmann G."/>
            <person name="Liu S.X."/>
            <person name="Lam B."/>
            <person name="Sakano H."/>
            <person name="Wu T."/>
            <person name="Yu G."/>
            <person name="Miranda M."/>
            <person name="Quach H.L."/>
            <person name="Tripp M."/>
            <person name="Chang C.H."/>
            <person name="Lee J.M."/>
            <person name="Toriumi M.J."/>
            <person name="Chan M.M."/>
            <person name="Tang C.C."/>
            <person name="Onodera C.S."/>
            <person name="Deng J.M."/>
            <person name="Akiyama K."/>
            <person name="Ansari Y."/>
            <person name="Arakawa T."/>
            <person name="Banh J."/>
            <person name="Banno F."/>
            <person name="Bowser L."/>
            <person name="Brooks S.Y."/>
            <person name="Carninci P."/>
            <person name="Chao Q."/>
            <person name="Choy N."/>
            <person name="Enju A."/>
            <person name="Goldsmith A.D."/>
            <person name="Gurjal M."/>
            <person name="Hansen N.F."/>
            <person name="Hayashizaki Y."/>
            <person name="Johnson-Hopson C."/>
            <person name="Hsuan V.W."/>
            <person name="Iida K."/>
            <person name="Karnes M."/>
            <person name="Khan S."/>
            <person name="Koesema E."/>
            <person name="Ishida J."/>
            <person name="Jiang P.X."/>
            <person name="Jones T."/>
            <person name="Kawai J."/>
            <person name="Kamiya A."/>
            <person name="Meyers C."/>
            <person name="Nakajima M."/>
            <person name="Narusaka M."/>
            <person name="Seki M."/>
            <person name="Sakurai T."/>
            <person name="Satou M."/>
            <person name="Tamse R."/>
            <person name="Vaysberg M."/>
            <person name="Wallender E.K."/>
            <person name="Wong C."/>
            <person name="Yamamura Y."/>
            <person name="Yuan S."/>
            <person name="Shinozaki K."/>
            <person name="Davis R.W."/>
            <person name="Theologis A."/>
            <person name="Ecker J.R."/>
        </authorList>
    </citation>
    <scope>NUCLEOTIDE SEQUENCE [LARGE SCALE MRNA]</scope>
    <source>
        <strain>cv. Columbia</strain>
    </source>
</reference>
<reference key="5">
    <citation type="submission" date="2002-03" db="EMBL/GenBank/DDBJ databases">
        <title>Full-length cDNA from Arabidopsis thaliana.</title>
        <authorList>
            <person name="Brover V.V."/>
            <person name="Troukhan M.E."/>
            <person name="Alexandrov N.A."/>
            <person name="Lu Y.-P."/>
            <person name="Flavell R.B."/>
            <person name="Feldmann K.A."/>
        </authorList>
    </citation>
    <scope>NUCLEOTIDE SEQUENCE [LARGE SCALE MRNA]</scope>
</reference>
<reference key="6">
    <citation type="journal article" date="2007" name="Plant Mol. Biol.">
        <title>Molecular characterization of two Arabidopsis thaliana glycosyltransferase mutants, rra1 and rra2, which have a reduced residual arabinose content in a polymer tightly associated with the cellulosic wall residue.</title>
        <authorList>
            <person name="Egelund J."/>
            <person name="Obel N."/>
            <person name="Ulvskov P."/>
            <person name="Geshi N."/>
            <person name="Pauly M."/>
            <person name="Bacic A."/>
            <person name="Petersen B.L."/>
        </authorList>
    </citation>
    <scope>FUNCTION</scope>
    <scope>DISRUPTION PHENOTYPE</scope>
    <source>
        <strain>cv. Columbia</strain>
    </source>
</reference>
<reference key="7">
    <citation type="journal article" date="2011" name="Science">
        <title>O-glycosylated cell wall proteins are essential in root hair growth.</title>
        <authorList>
            <person name="Velasquez S.M."/>
            <person name="Ricardi M.M."/>
            <person name="Dorosz J.G."/>
            <person name="Fernandez P.V."/>
            <person name="Nadra A.D."/>
            <person name="Pol-Fachin L."/>
            <person name="Egelund J."/>
            <person name="Gille S."/>
            <person name="Harholt J."/>
            <person name="Ciancia M."/>
            <person name="Verli H."/>
            <person name="Pauly M."/>
            <person name="Bacic A."/>
            <person name="Olsen C.E."/>
            <person name="Ulvskov P."/>
            <person name="Petersen B.L."/>
            <person name="Somerville C."/>
            <person name="Iusem N.D."/>
            <person name="Estevez J.M."/>
        </authorList>
    </citation>
    <scope>FUNCTION</scope>
    <scope>SUBCELLULAR LOCATION</scope>
    <scope>DISRUPTION PHENOTYPE</scope>
    <source>
        <strain>cv. Columbia</strain>
    </source>
</reference>
<comment type="function">
    <text evidence="4 5">Plays a role in the arabinosylation of cell wall components (PubMed:17401635). Involved in the arabinosylation of extensin proteins in root hair cells. Extensins are structural glycoproteins present in cell walls and its arabinosylation is important for root hair cell development (PubMed:21680836).</text>
</comment>
<comment type="subcellular location">
    <subcellularLocation>
        <location evidence="5">Golgi apparatus membrane</location>
        <topology evidence="8">Single-pass type II membrane protein</topology>
    </subcellularLocation>
</comment>
<comment type="tissue specificity">
    <text evidence="4">Expressed in roots, rosette and cauline leaves, stems, flowers and siliques.</text>
</comment>
<comment type="domain">
    <text evidence="1">The conserved DXD motif is involved in enzyme activity.</text>
</comment>
<comment type="disruption phenotype">
    <text evidence="4 5">Reduced arabinose content in the insoluble cell wall fraction of meristematic region (PubMed:17401635). Reduced root hair length and content of arabinosylated extensins in root cell walls (PubMed:21680836).</text>
</comment>
<comment type="similarity">
    <text evidence="7">Belongs to the glycosyltransferase 77 family.</text>
</comment>
<organism>
    <name type="scientific">Arabidopsis thaliana</name>
    <name type="common">Mouse-ear cress</name>
    <dbReference type="NCBI Taxonomy" id="3702"/>
    <lineage>
        <taxon>Eukaryota</taxon>
        <taxon>Viridiplantae</taxon>
        <taxon>Streptophyta</taxon>
        <taxon>Embryophyta</taxon>
        <taxon>Tracheophyta</taxon>
        <taxon>Spermatophyta</taxon>
        <taxon>Magnoliopsida</taxon>
        <taxon>eudicotyledons</taxon>
        <taxon>Gunneridae</taxon>
        <taxon>Pentapetalae</taxon>
        <taxon>rosids</taxon>
        <taxon>malvids</taxon>
        <taxon>Brassicales</taxon>
        <taxon>Brassicaceae</taxon>
        <taxon>Camelineae</taxon>
        <taxon>Arabidopsis</taxon>
    </lineage>
</organism>
<keyword id="KW-0961">Cell wall biogenesis/degradation</keyword>
<keyword id="KW-0325">Glycoprotein</keyword>
<keyword id="KW-0328">Glycosyltransferase</keyword>
<keyword id="KW-0333">Golgi apparatus</keyword>
<keyword id="KW-0472">Membrane</keyword>
<keyword id="KW-1185">Reference proteome</keyword>
<keyword id="KW-0735">Signal-anchor</keyword>
<keyword id="KW-0808">Transferase</keyword>
<keyword id="KW-0812">Transmembrane</keyword>
<keyword id="KW-1133">Transmembrane helix</keyword>
<proteinExistence type="evidence at transcript level"/>